<organism>
    <name type="scientific">Porphyromonas gingivalis (strain ATCC 33277 / DSM 20709 / CIP 103683 / JCM 12257 / NCTC 11834 / 2561)</name>
    <dbReference type="NCBI Taxonomy" id="431947"/>
    <lineage>
        <taxon>Bacteria</taxon>
        <taxon>Pseudomonadati</taxon>
        <taxon>Bacteroidota</taxon>
        <taxon>Bacteroidia</taxon>
        <taxon>Bacteroidales</taxon>
        <taxon>Porphyromonadaceae</taxon>
        <taxon>Porphyromonas</taxon>
    </lineage>
</organism>
<gene>
    <name type="primary">mfa3</name>
    <name evidence="12" type="ordered locus">PGN_0289</name>
</gene>
<accession>B2RHG3</accession>
<reference evidence="12 13" key="1">
    <citation type="journal article" date="2008" name="DNA Res.">
        <title>Determination of the genome sequence of Porphyromonas gingivalis strain ATCC 33277 and genomic comparison with strain W83 revealed extensive genome rearrangements in P. gingivalis.</title>
        <authorList>
            <person name="Naito M."/>
            <person name="Hirakawa H."/>
            <person name="Yamashita A."/>
            <person name="Ohara N."/>
            <person name="Shoji M."/>
            <person name="Yukitake H."/>
            <person name="Nakayama K."/>
            <person name="Toh H."/>
            <person name="Yoshimura F."/>
            <person name="Kuhara S."/>
            <person name="Hattori M."/>
            <person name="Hayashi T."/>
            <person name="Nakayama K."/>
        </authorList>
    </citation>
    <scope>NUCLEOTIDE SEQUENCE [LARGE SCALE GENOMIC DNA]</scope>
    <source>
        <strain evidence="13">ATCC 33277 / DSM 20709 / CIP 103683 / JCM 12257 / NCTC 11834 / 2561</strain>
    </source>
</reference>
<reference key="2">
    <citation type="journal article" date="2009" name="Microbiology">
        <title>Anchoring and length regulation of Porphyromonas gingivalis Mfa1 fimbriae by the downstream gene product Mfa2.</title>
        <authorList>
            <person name="Hasegawa Y."/>
            <person name="Iwami J."/>
            <person name="Sato K."/>
            <person name="Park Y."/>
            <person name="Nishikawa K."/>
            <person name="Atsumi T."/>
            <person name="Moriguchi K."/>
            <person name="Murakami Y."/>
            <person name="Lamont R.J."/>
            <person name="Nakamura H."/>
            <person name="Ohno N."/>
            <person name="Yoshimura F."/>
        </authorList>
    </citation>
    <scope>IDENTIFICATION BY MASS SPECTROMETRY</scope>
    <scope>SUBCELLULAR LOCATION</scope>
    <scope>SUBUNIT</scope>
    <source>
        <strain evidence="6">ATCC 33277 / DSM 20709 / CIP 103683 / JCM 12257 / NCTC 11834 / 2561</strain>
    </source>
</reference>
<reference key="3">
    <citation type="journal article" date="2013" name="Mol. Oral. Microbiol.">
        <title>Localization and function of the accessory protein Mfa3 in Porphyromonas gingivalis Mfa1 fimbriae.</title>
        <authorList>
            <person name="Hasegawa Y."/>
            <person name="Nagano K."/>
            <person name="Ikai R."/>
            <person name="Izumigawa M."/>
            <person name="Yoshida Y."/>
            <person name="Kitai N."/>
            <person name="Lamont R.J."/>
            <person name="Murakami Y."/>
            <person name="Yoshimura F."/>
        </authorList>
    </citation>
    <scope>PROTEIN SEQUENCE OF 44-51</scope>
    <scope>SUBCELLULAR LOCATION</scope>
    <scope>FUNCTION</scope>
    <scope>SUBUNIT</scope>
    <scope>PROPEPTIDE</scope>
    <scope>DISRUPTION PHENOTYPE</scope>
    <source>
        <strain evidence="7">ATCC 33277 / DSM 20709 / CIP 103683 / JCM 12257 / NCTC 11834 / 2561</strain>
    </source>
</reference>
<reference key="4">
    <citation type="journal article" date="2015" name="J. Dent. Res.">
        <title>A major fimbrilin variant of Mfa1 fimbriae in Porphyromonas gingivalis.</title>
        <authorList>
            <person name="Nagano K."/>
            <person name="Hasegawa Y."/>
            <person name="Yoshida Y."/>
            <person name="Yoshimura F."/>
        </authorList>
    </citation>
    <scope>FUNCTION</scope>
    <scope>SUBUNIT</scope>
    <scope>SUBCELLULAR LOCATION</scope>
    <source>
        <strain evidence="8">ATCC 33277 / DSM 20709 / CIP 103683 / JCM 12257 / NCTC 11834 / 2561</strain>
    </source>
</reference>
<reference key="5">
    <citation type="journal article" date="2015" name="PLoS ONE">
        <title>Mfa4, an accessory protein of Mfa1 fimbriae, modulates fimbrial biogenesis, cell auto-aggregation, and biofilm formation in Porphyromonas gingivalis.</title>
        <authorList>
            <person name="Ikai R."/>
            <person name="Hasegawa Y."/>
            <person name="Izumigawa M."/>
            <person name="Nagano K."/>
            <person name="Yoshida Y."/>
            <person name="Kitai N."/>
            <person name="Lamont R.J."/>
            <person name="Yoshimura F."/>
            <person name="Murakami Y."/>
        </authorList>
    </citation>
    <scope>SUBCELLULAR LOCATION</scope>
    <scope>IDENTIFICATION BY MASS SPECTROMETRY</scope>
    <source>
        <strain evidence="9">ATCC 33277 / DSM 20709 / CIP 103683 / JCM 12257 / NCTC 11834 / 2561</strain>
    </source>
</reference>
<comment type="function">
    <text evidence="3 4 10">Tip subunit of the minor fimbriae. These filamentous pili are attached to the cell surface; they mediate biofilm formation, adhesion onto host cells and onto other bacteria that are part of the oral microbiome (PubMed:24118823, PubMed:26001707). They play an important role in invasion of periodontal tissues and are recognized as major virulence factors. Fimbrium subunits from different strains have highly divergent sequences, and this correlates with pathogenicity (Probable).</text>
</comment>
<comment type="subunit">
    <text evidence="2 3 4 10">Component of the fimbrium tip (PubMed:24118823). Minor fimbriae are composed of a structural subunit, most often Mfa1, and the accessory subunits Mfa3, Mfa4 and Mfa5 (PubMed:19589838, PubMed:24118823, PubMed:26001707). Fimbrium assembly occurs by linear, head-to-tail oligomerization of fimbrial subunits. This is mediated via insertion of a C-terminal beta-strand from one subunit into a groove in the N-terminal domain of the following subunit (Probable). Mfa3 is required for Mfa4 and Mfa5 insertion into the fimbrium (PubMed:24118823).</text>
</comment>
<comment type="subcellular location">
    <subcellularLocation>
        <location evidence="2 3 4">Fimbrium</location>
    </subcellularLocation>
    <subcellularLocation>
        <location evidence="3 5">Cell outer membrane</location>
    </subcellularLocation>
    <text evidence="3 11">Targeted to the outer membrane as a palmitoylated precursor. The lipid modification is no longer present after proteolytic processing to the mature form (PubMed:26437277). Detected at the tip of the fimbriae (PubMed:24118823).</text>
</comment>
<comment type="disruption phenotype">
    <text evidence="3">Mildly increased autoaggregation.</text>
</comment>
<comment type="miscellaneous">
    <text evidence="10">The name (minor fimbrium subunit) does not indicate the abundance of the protein, but is derived from the greater length of the major fimbriae. In strain ATCC 33277 and strain ATCC BAA-1703 / FDC 381, major fimbriae are 300 - 1600 nM in length and about 5 nm in diameter. In contrast, minor fimbriae are only about 80 - 120 nm long. This length difference is observed only in a small number of strains, including strain ATCC 33277 and strain ATCC BAA-1703 / FDC 381, and is due to a loss of function mutation in FimB, a protein that restricts fimbrial length in other strains.</text>
</comment>
<comment type="similarity">
    <text evidence="10">Belongs to the bacteroidetes fimbrillin superfamily. FimB/Mfa2 family.</text>
</comment>
<protein>
    <recommendedName>
        <fullName>Minor fimbrium tip subunit Mfa3</fullName>
    </recommendedName>
</protein>
<name>MFA3_PORG3</name>
<keyword id="KW-0002">3D-structure</keyword>
<keyword id="KW-0998">Cell outer membrane</keyword>
<keyword id="KW-0903">Direct protein sequencing</keyword>
<keyword id="KW-0281">Fimbrium</keyword>
<keyword id="KW-0449">Lipoprotein</keyword>
<keyword id="KW-0472">Membrane</keyword>
<keyword id="KW-0564">Palmitate</keyword>
<keyword id="KW-0732">Signal</keyword>
<keyword id="KW-0843">Virulence</keyword>
<feature type="signal peptide" evidence="1">
    <location>
        <begin position="1"/>
        <end position="20"/>
    </location>
</feature>
<feature type="propeptide" id="PRO_0000436795" evidence="3">
    <location>
        <begin position="21"/>
        <end position="43"/>
    </location>
</feature>
<feature type="chain" id="PRO_5002781645" description="Minor fimbrium tip subunit Mfa3">
    <location>
        <begin position="44"/>
        <end position="446"/>
    </location>
</feature>
<feature type="lipid moiety-binding region" description="N-palmitoyl cysteine" evidence="1">
    <location>
        <position position="21"/>
    </location>
</feature>
<feature type="lipid moiety-binding region" description="S-diacylglycerol cysteine" evidence="1">
    <location>
        <position position="21"/>
    </location>
</feature>
<feature type="strand" evidence="14">
    <location>
        <begin position="36"/>
        <end position="44"/>
    </location>
</feature>
<feature type="helix" evidence="14">
    <location>
        <begin position="60"/>
        <end position="62"/>
    </location>
</feature>
<feature type="strand" evidence="14">
    <location>
        <begin position="66"/>
        <end position="73"/>
    </location>
</feature>
<feature type="turn" evidence="14">
    <location>
        <begin position="74"/>
        <end position="76"/>
    </location>
</feature>
<feature type="strand" evidence="14">
    <location>
        <begin position="78"/>
        <end position="86"/>
    </location>
</feature>
<feature type="strand" evidence="14">
    <location>
        <begin position="93"/>
        <end position="101"/>
    </location>
</feature>
<feature type="strand" evidence="14">
    <location>
        <begin position="104"/>
        <end position="113"/>
    </location>
</feature>
<feature type="helix" evidence="14">
    <location>
        <begin position="117"/>
        <end position="121"/>
    </location>
</feature>
<feature type="helix" evidence="14">
    <location>
        <begin position="127"/>
        <end position="135"/>
    </location>
</feature>
<feature type="helix" evidence="14">
    <location>
        <begin position="142"/>
        <end position="145"/>
    </location>
</feature>
<feature type="strand" evidence="14">
    <location>
        <begin position="156"/>
        <end position="165"/>
    </location>
</feature>
<feature type="strand" evidence="14">
    <location>
        <begin position="171"/>
        <end position="173"/>
    </location>
</feature>
<feature type="helix" evidence="14">
    <location>
        <begin position="179"/>
        <end position="181"/>
    </location>
</feature>
<feature type="strand" evidence="14">
    <location>
        <begin position="183"/>
        <end position="200"/>
    </location>
</feature>
<feature type="helix" evidence="14">
    <location>
        <begin position="202"/>
        <end position="204"/>
    </location>
</feature>
<feature type="strand" evidence="14">
    <location>
        <begin position="205"/>
        <end position="212"/>
    </location>
</feature>
<feature type="strand" evidence="14">
    <location>
        <begin position="214"/>
        <end position="217"/>
    </location>
</feature>
<feature type="strand" evidence="14">
    <location>
        <begin position="241"/>
        <end position="249"/>
    </location>
</feature>
<feature type="strand" evidence="14">
    <location>
        <begin position="261"/>
        <end position="264"/>
    </location>
</feature>
<feature type="strand" evidence="14">
    <location>
        <begin position="272"/>
        <end position="277"/>
    </location>
</feature>
<feature type="strand" evidence="14">
    <location>
        <begin position="282"/>
        <end position="286"/>
    </location>
</feature>
<feature type="helix" evidence="14">
    <location>
        <begin position="299"/>
        <end position="303"/>
    </location>
</feature>
<feature type="strand" evidence="14">
    <location>
        <begin position="307"/>
        <end position="309"/>
    </location>
</feature>
<feature type="strand" evidence="14">
    <location>
        <begin position="319"/>
        <end position="327"/>
    </location>
</feature>
<feature type="strand" evidence="14">
    <location>
        <begin position="332"/>
        <end position="340"/>
    </location>
</feature>
<evidence type="ECO:0000255" key="1">
    <source>
        <dbReference type="PROSITE-ProRule" id="PRU00303"/>
    </source>
</evidence>
<evidence type="ECO:0000269" key="2">
    <source>
    </source>
</evidence>
<evidence type="ECO:0000269" key="3">
    <source>
    </source>
</evidence>
<evidence type="ECO:0000269" key="4">
    <source>
    </source>
</evidence>
<evidence type="ECO:0000269" key="5">
    <source>
    </source>
</evidence>
<evidence type="ECO:0000303" key="6">
    <source>
    </source>
</evidence>
<evidence type="ECO:0000303" key="7">
    <source>
    </source>
</evidence>
<evidence type="ECO:0000303" key="8">
    <source>
    </source>
</evidence>
<evidence type="ECO:0000303" key="9">
    <source>
    </source>
</evidence>
<evidence type="ECO:0000305" key="10"/>
<evidence type="ECO:0000305" key="11">
    <source>
    </source>
</evidence>
<evidence type="ECO:0000312" key="12">
    <source>
        <dbReference type="EMBL" id="BAG32808.1"/>
    </source>
</evidence>
<evidence type="ECO:0000312" key="13">
    <source>
        <dbReference type="Proteomes" id="UP000008842"/>
    </source>
</evidence>
<evidence type="ECO:0007829" key="14">
    <source>
        <dbReference type="PDB" id="5NF4"/>
    </source>
</evidence>
<proteinExistence type="evidence at protein level"/>
<dbReference type="EMBL" id="AP009380">
    <property type="protein sequence ID" value="BAG32808.1"/>
    <property type="molecule type" value="Genomic_DNA"/>
</dbReference>
<dbReference type="RefSeq" id="WP_012457397.1">
    <property type="nucleotide sequence ID" value="NC_010729.1"/>
</dbReference>
<dbReference type="PDB" id="5NF4">
    <property type="method" value="X-ray"/>
    <property type="resolution" value="1.75 A"/>
    <property type="chains" value="A/B=23-446"/>
</dbReference>
<dbReference type="PDBsum" id="5NF4"/>
<dbReference type="SMR" id="B2RHG3"/>
<dbReference type="GeneID" id="29255535"/>
<dbReference type="KEGG" id="pgn:PGN_0289"/>
<dbReference type="eggNOG" id="ENOG502ZBHU">
    <property type="taxonomic scope" value="Bacteria"/>
</dbReference>
<dbReference type="HOGENOM" id="CLU_051995_0_0_10"/>
<dbReference type="OrthoDB" id="1014294at2"/>
<dbReference type="BioCyc" id="PGIN431947:G1G2V-316-MONOMER"/>
<dbReference type="Proteomes" id="UP000008842">
    <property type="component" value="Chromosome"/>
</dbReference>
<dbReference type="GO" id="GO:0009279">
    <property type="term" value="C:cell outer membrane"/>
    <property type="evidence" value="ECO:0007669"/>
    <property type="project" value="UniProtKB-SubCell"/>
</dbReference>
<dbReference type="GO" id="GO:0009289">
    <property type="term" value="C:pilus"/>
    <property type="evidence" value="ECO:0000314"/>
    <property type="project" value="UniProtKB"/>
</dbReference>
<dbReference type="GO" id="GO:0009419">
    <property type="term" value="C:pilus tip"/>
    <property type="evidence" value="ECO:0000314"/>
    <property type="project" value="UniProtKB"/>
</dbReference>
<dbReference type="InterPro" id="IPR014941">
    <property type="entry name" value="FimB/Mfa2/Mfa3"/>
</dbReference>
<dbReference type="Pfam" id="PF08842">
    <property type="entry name" value="Mfa2"/>
    <property type="match status" value="1"/>
</dbReference>
<dbReference type="PROSITE" id="PS51257">
    <property type="entry name" value="PROKAR_LIPOPROTEIN"/>
    <property type="match status" value="1"/>
</dbReference>
<sequence length="446" mass="50047">MMQLKKRYFALILLLFLWSGCDRGVDPQPDPLQPDVYLLVNARAAHTNGEESINMDAEDFEDRVHSLAMLVFDSNTGEKVAEHFSSSIGSGTSTYVFTVKLKPGQRDFFFVANIPNMQTAMASIVNKSDMNHFMQVFRDLDPIHYHNATNNNGFPMSRMYSNQTVTIGGTITQPLPFKPDGENNVKLQRVVAKLDVNIVEGVENLQKIELCNANVHYRLVPNQSEPIQFYGPVELRRVGATNQWLGYMPEAIVESTKWWGNTGNAENKPINFFRLTTRGGLVYDVPIITHEGAIPGGQYLPFAKGLLADKPSYTVYRNRHYIYRIKTLPDKIEVKYSICDWNIVTNDTYMGYGYNVGVDEQGNVTITNTMQNCDPHVVRLVAKNGAYFGSQPTDTSVEFTELANGASQTFKVNKDAVAVGSAYLEVYYNPDLNATGVVPDKVFIKK</sequence>